<keyword id="KW-0002">3D-structure</keyword>
<keyword id="KW-1015">Disulfide bond</keyword>
<keyword id="KW-0325">Glycoprotein</keyword>
<keyword id="KW-0964">Secreted</keyword>
<keyword id="KW-0732">Signal</keyword>
<feature type="signal peptide" evidence="2">
    <location>
        <begin position="1"/>
        <end position="28"/>
    </location>
</feature>
<feature type="chain" id="PRO_5001520871" description="Evasin P991" evidence="2">
    <location>
        <begin position="29"/>
        <end position="136"/>
    </location>
</feature>
<feature type="glycosylation site" description="N-linked (GlcNAc...) asparagine" evidence="3">
    <location>
        <position position="41"/>
    </location>
</feature>
<feature type="glycosylation site" description="N-linked (GlcNAc...) asparagine" evidence="3">
    <location>
        <position position="61"/>
    </location>
</feature>
<feature type="glycosylation site" description="N-linked (GlcNAc...) asparagine" evidence="3">
    <location>
        <position position="64"/>
    </location>
</feature>
<feature type="glycosylation site" description="N-linked (GlcNAc...) asparagine" evidence="3">
    <location>
        <position position="78"/>
    </location>
</feature>
<feature type="glycosylation site" description="N-linked (GlcNAc...) asparagine" evidence="3">
    <location>
        <position position="92"/>
    </location>
</feature>
<feature type="glycosylation site" description="N-linked (GlcNAc...) asparagine" evidence="3">
    <location>
        <position position="100"/>
    </location>
</feature>
<feature type="glycosylation site" description="N-linked (GlcNAc...) asparagine" evidence="3">
    <location>
        <position position="122"/>
    </location>
</feature>
<feature type="disulfide bond" evidence="1">
    <location>
        <begin position="55"/>
        <end position="77"/>
    </location>
</feature>
<feature type="disulfide bond" evidence="1">
    <location>
        <begin position="73"/>
        <end position="114"/>
    </location>
</feature>
<feature type="disulfide bond" evidence="1">
    <location>
        <begin position="90"/>
        <end position="119"/>
    </location>
</feature>
<feature type="disulfide bond" evidence="1">
    <location>
        <begin position="109"/>
        <end position="128"/>
    </location>
</feature>
<feature type="helix" evidence="8">
    <location>
        <begin position="49"/>
        <end position="51"/>
    </location>
</feature>
<feature type="strand" evidence="8">
    <location>
        <begin position="63"/>
        <end position="65"/>
    </location>
</feature>
<feature type="strand" evidence="8">
    <location>
        <begin position="71"/>
        <end position="83"/>
    </location>
</feature>
<feature type="strand" evidence="8">
    <location>
        <begin position="89"/>
        <end position="92"/>
    </location>
</feature>
<feature type="helix" evidence="8">
    <location>
        <begin position="95"/>
        <end position="99"/>
    </location>
</feature>
<feature type="strand" evidence="8">
    <location>
        <begin position="103"/>
        <end position="105"/>
    </location>
</feature>
<feature type="strand" evidence="8">
    <location>
        <begin position="107"/>
        <end position="115"/>
    </location>
</feature>
<feature type="strand" evidence="8">
    <location>
        <begin position="118"/>
        <end position="129"/>
    </location>
</feature>
<organism>
    <name type="scientific">Amblyomma cajennense</name>
    <name type="common">Cayenne tick</name>
    <name type="synonym">Acarus cajennensis</name>
    <dbReference type="NCBI Taxonomy" id="34607"/>
    <lineage>
        <taxon>Eukaryota</taxon>
        <taxon>Metazoa</taxon>
        <taxon>Ecdysozoa</taxon>
        <taxon>Arthropoda</taxon>
        <taxon>Chelicerata</taxon>
        <taxon>Arachnida</taxon>
        <taxon>Acari</taxon>
        <taxon>Parasitiformes</taxon>
        <taxon>Ixodida</taxon>
        <taxon>Ixodoidea</taxon>
        <taxon>Ixodidae</taxon>
        <taxon>Amblyomminae</taxon>
        <taxon>Amblyomma</taxon>
    </lineage>
</organism>
<sequence>MHSTIVYACLLALAVFVALHGTPLAALAENGEGTTQPDYDNSTDYYNYEDFKCTCPAPHLNNTNGTVMKPIGCYYTCNVTRCTAPDTYPCYNLTEHQAKNLTTSPTTLCAVGNCDHGICVPNGTKELCFKAPNLEE</sequence>
<name>EV991_AMBCJ</name>
<dbReference type="EMBL" id="GBBK01004828">
    <property type="protein sequence ID" value="JAC19654.1"/>
    <property type="molecule type" value="mRNA"/>
</dbReference>
<dbReference type="PDB" id="8FK9">
    <property type="method" value="X-ray"/>
    <property type="resolution" value="2.70 A"/>
    <property type="chains" value="A/B=29-136"/>
</dbReference>
<dbReference type="PDBsum" id="8FK9"/>
<dbReference type="SMR" id="A0A023FFD0"/>
<dbReference type="GO" id="GO:0005576">
    <property type="term" value="C:extracellular region"/>
    <property type="evidence" value="ECO:0007669"/>
    <property type="project" value="UniProtKB-SubCell"/>
</dbReference>
<dbReference type="GO" id="GO:0019957">
    <property type="term" value="F:C-C chemokine binding"/>
    <property type="evidence" value="ECO:0000314"/>
    <property type="project" value="UniProtKB"/>
</dbReference>
<dbReference type="GO" id="GO:1900137">
    <property type="term" value="P:negative regulation of chemokine activity"/>
    <property type="evidence" value="ECO:0000314"/>
    <property type="project" value="UniProtKB"/>
</dbReference>
<dbReference type="Gene3D" id="2.30.130.100">
    <property type="match status" value="1"/>
</dbReference>
<dbReference type="InterPro" id="IPR045797">
    <property type="entry name" value="EVA_Class_A"/>
</dbReference>
<dbReference type="Pfam" id="PF19429">
    <property type="entry name" value="EVA_Class_A"/>
    <property type="match status" value="1"/>
</dbReference>
<comment type="function">
    <text evidence="4">Salivary chemokine-binding protein which has chemokine-neutralizing activity and binds to host chemokines CCL2, CCL3, CCL3L1, CCL4, CCL4L1, CCL5, CCL6, CCL7, CCL8, CCL9, CCL11, CCL12, CCL13, CCL14, CCL16, CCL17, CCL18, CCL19, CCL22, CCL23, CCL24 and CCL27.</text>
</comment>
<comment type="subcellular location">
    <subcellularLocation>
        <location evidence="6">Secreted</location>
    </subcellularLocation>
</comment>
<reference evidence="7" key="1">
    <citation type="journal article" date="2014" name="Parasit. Vectors">
        <title>The sialotranscriptome of Amblyomma triste, Amblyomma parvum and Amblyomma cajennense ticks, uncovered by 454-based RNA-seq.</title>
        <authorList>
            <person name="Garcia G.R."/>
            <person name="Gardinassi L.G."/>
            <person name="Ribeiro J.M."/>
            <person name="Anatriello E."/>
            <person name="Ferreira B.R."/>
            <person name="Moreira H.N."/>
            <person name="Mafra C."/>
            <person name="Martins M.M."/>
            <person name="Szabo M.P."/>
            <person name="de Miranda-Santos I.K."/>
            <person name="Maruyama S.R."/>
        </authorList>
    </citation>
    <scope>NUCLEOTIDE SEQUENCE [LARGE SCALE MRNA]</scope>
    <source>
        <strain evidence="7">Uberlandia</strain>
        <tissue evidence="7">Salivary gland</tissue>
    </source>
</reference>
<reference evidence="6" key="2">
    <citation type="journal article" date="2017" name="Sci. Rep.">
        <title>Yeast surface display identifies a family of evasins from ticks with novel polyvalent CC chemokine-binding activities.</title>
        <authorList>
            <person name="Singh K."/>
            <person name="Davies G."/>
            <person name="Alenazi Y."/>
            <person name="Eaton J.R.O."/>
            <person name="Kawamura A."/>
            <person name="Bhattacharya S."/>
        </authorList>
    </citation>
    <scope>FUNCTION</scope>
</reference>
<protein>
    <recommendedName>
        <fullName evidence="5">Evasin P991</fullName>
    </recommendedName>
</protein>
<proteinExistence type="evidence at protein level"/>
<evidence type="ECO:0000250" key="1">
    <source>
        <dbReference type="UniProtKB" id="P0C8E7"/>
    </source>
</evidence>
<evidence type="ECO:0000255" key="2"/>
<evidence type="ECO:0000255" key="3">
    <source>
        <dbReference type="PROSITE-ProRule" id="PRU00498"/>
    </source>
</evidence>
<evidence type="ECO:0000269" key="4">
    <source>
    </source>
</evidence>
<evidence type="ECO:0000303" key="5">
    <source>
    </source>
</evidence>
<evidence type="ECO:0000305" key="6"/>
<evidence type="ECO:0000312" key="7">
    <source>
        <dbReference type="EMBL" id="JAC19654.1"/>
    </source>
</evidence>
<evidence type="ECO:0007829" key="8">
    <source>
        <dbReference type="PDB" id="8FK9"/>
    </source>
</evidence>
<accession>A0A023FFD0</accession>